<keyword id="KW-0067">ATP-binding</keyword>
<keyword id="KW-0149">Chlorophyll biosynthesis</keyword>
<keyword id="KW-0150">Chloroplast</keyword>
<keyword id="KW-0436">Ligase</keyword>
<keyword id="KW-0547">Nucleotide-binding</keyword>
<keyword id="KW-0602">Photosynthesis</keyword>
<keyword id="KW-0934">Plastid</keyword>
<protein>
    <recommendedName>
        <fullName>Magnesium-chelatase subunit ChlI</fullName>
        <ecNumber>6.6.1.1</ecNumber>
    </recommendedName>
    <alternativeName>
        <fullName>Mg-protoporphyrin IX chelatase</fullName>
    </alternativeName>
</protein>
<reference key="1">
    <citation type="journal article" date="1993" name="J. Mar. Biotechnol.">
        <title>A bchI homolog, encoding a subunit of Mg chelatase, is located on the plastid genomes of red and cryptomonad algae.</title>
        <authorList>
            <person name="Douglas S.E."/>
            <person name="Reith M."/>
        </authorList>
    </citation>
    <scope>NUCLEOTIDE SEQUENCE [GENOMIC DNA]</scope>
</reference>
<sequence>MTINITKTKERPVFPFTAIVGQEEMKLALTLNVIDPKIGGVIIMGDRGTGKSTTIRAITDILPEIPIVENDPFNSHPQDFDLMSDEVRSRIEKGESIPSVMKKVSMIDLPLGATEDRVCGTIDIEKALTEGVKAFEPGLLAKANRGILYVDEVNLLDDHLVDILLDSAASGWNTVEREGISIRHPARFVLVGSGNPEEGELRPQLLDRFGMHSEIRTVRDPELRVKIVEQRSEFDKNPSACLETYKNQQTEFKQRIIQAQKVLPTVELDYDLRIRISKICGELDVDGLRGDIVTNRAAKAHAAFNGKQTVTVDDIKAVITMCLRHRLRKDPLETIDSGSKVQKVFEDIFADLM</sequence>
<geneLocation type="chloroplast"/>
<feature type="chain" id="PRO_0000206868" description="Magnesium-chelatase subunit ChlI">
    <location>
        <begin position="1"/>
        <end position="353"/>
    </location>
</feature>
<feature type="binding site" evidence="1">
    <location>
        <begin position="45"/>
        <end position="52"/>
    </location>
    <ligand>
        <name>ATP</name>
        <dbReference type="ChEBI" id="CHEBI:30616"/>
    </ligand>
</feature>
<gene>
    <name type="primary">chlI</name>
</gene>
<evidence type="ECO:0000255" key="1"/>
<evidence type="ECO:0000305" key="2"/>
<comment type="function">
    <text>Involved in chlorophyll biosynthesis; introduces a magnesium ion into protoporphyrin IX to yield Mg-protoporphyrin IX.</text>
</comment>
<comment type="catalytic activity">
    <reaction>
        <text>protoporphyrin IX + Mg(2+) + ATP + H2O = Mg-protoporphyrin IX + ADP + phosphate + 3 H(+)</text>
        <dbReference type="Rhea" id="RHEA:13961"/>
        <dbReference type="ChEBI" id="CHEBI:15377"/>
        <dbReference type="ChEBI" id="CHEBI:15378"/>
        <dbReference type="ChEBI" id="CHEBI:18420"/>
        <dbReference type="ChEBI" id="CHEBI:30616"/>
        <dbReference type="ChEBI" id="CHEBI:43474"/>
        <dbReference type="ChEBI" id="CHEBI:57306"/>
        <dbReference type="ChEBI" id="CHEBI:60492"/>
        <dbReference type="ChEBI" id="CHEBI:456216"/>
        <dbReference type="EC" id="6.6.1.1"/>
    </reaction>
</comment>
<comment type="pathway">
    <text>Porphyrin-containing compound metabolism; chlorophyll biosynthesis.</text>
</comment>
<comment type="subcellular location">
    <subcellularLocation>
        <location>Plastid</location>
        <location>Chloroplast</location>
    </subcellularLocation>
</comment>
<comment type="similarity">
    <text evidence="2">Belongs to the Mg-chelatase subunits D/I family.</text>
</comment>
<dbReference type="EC" id="6.6.1.1"/>
<dbReference type="EMBL" id="AF041468">
    <property type="protein sequence ID" value="AAC35636.1"/>
    <property type="molecule type" value="Genomic_DNA"/>
</dbReference>
<dbReference type="PIR" id="S37138">
    <property type="entry name" value="S37138"/>
</dbReference>
<dbReference type="RefSeq" id="NP_050702.1">
    <property type="nucleotide sequence ID" value="NC_000926.1"/>
</dbReference>
<dbReference type="SMR" id="Q39516"/>
<dbReference type="GeneID" id="856998"/>
<dbReference type="HOGENOM" id="CLU_016684_0_2_1"/>
<dbReference type="OMA" id="QDEMKLA"/>
<dbReference type="UniPathway" id="UPA00668"/>
<dbReference type="GO" id="GO:0009507">
    <property type="term" value="C:chloroplast"/>
    <property type="evidence" value="ECO:0007669"/>
    <property type="project" value="UniProtKB-SubCell"/>
</dbReference>
<dbReference type="GO" id="GO:0005524">
    <property type="term" value="F:ATP binding"/>
    <property type="evidence" value="ECO:0007669"/>
    <property type="project" value="UniProtKB-KW"/>
</dbReference>
<dbReference type="GO" id="GO:0016887">
    <property type="term" value="F:ATP hydrolysis activity"/>
    <property type="evidence" value="ECO:0007669"/>
    <property type="project" value="InterPro"/>
</dbReference>
<dbReference type="GO" id="GO:0016851">
    <property type="term" value="F:magnesium chelatase activity"/>
    <property type="evidence" value="ECO:0007669"/>
    <property type="project" value="UniProtKB-EC"/>
</dbReference>
<dbReference type="GO" id="GO:0015995">
    <property type="term" value="P:chlorophyll biosynthetic process"/>
    <property type="evidence" value="ECO:0007669"/>
    <property type="project" value="UniProtKB-UniPathway"/>
</dbReference>
<dbReference type="GO" id="GO:0015979">
    <property type="term" value="P:photosynthesis"/>
    <property type="evidence" value="ECO:0007669"/>
    <property type="project" value="UniProtKB-KW"/>
</dbReference>
<dbReference type="FunFam" id="3.40.50.300:FF:000601">
    <property type="entry name" value="Mg-protoporphyrin IX chelatase"/>
    <property type="match status" value="1"/>
</dbReference>
<dbReference type="Gene3D" id="1.10.8.80">
    <property type="entry name" value="Magnesium chelatase subunit I, C-Terminal domain"/>
    <property type="match status" value="1"/>
</dbReference>
<dbReference type="Gene3D" id="3.40.50.300">
    <property type="entry name" value="P-loop containing nucleotide triphosphate hydrolases"/>
    <property type="match status" value="1"/>
</dbReference>
<dbReference type="InterPro" id="IPR003593">
    <property type="entry name" value="AAA+_ATPase"/>
</dbReference>
<dbReference type="InterPro" id="IPR045006">
    <property type="entry name" value="CHLI-like"/>
</dbReference>
<dbReference type="InterPro" id="IPR041628">
    <property type="entry name" value="ChlI/MoxR_AAA_lid"/>
</dbReference>
<dbReference type="InterPro" id="IPR011775">
    <property type="entry name" value="Mg_chelatase_ATPase-isu"/>
</dbReference>
<dbReference type="InterPro" id="IPR000523">
    <property type="entry name" value="Mg_chelatse_chII-like_cat_dom"/>
</dbReference>
<dbReference type="InterPro" id="IPR027417">
    <property type="entry name" value="P-loop_NTPase"/>
</dbReference>
<dbReference type="NCBIfam" id="TIGR02030">
    <property type="entry name" value="BchI-ChlI"/>
    <property type="match status" value="1"/>
</dbReference>
<dbReference type="PANTHER" id="PTHR32039">
    <property type="entry name" value="MAGNESIUM-CHELATASE SUBUNIT CHLI"/>
    <property type="match status" value="1"/>
</dbReference>
<dbReference type="PANTHER" id="PTHR32039:SF9">
    <property type="entry name" value="MAGNESIUM-CHELATASE SUBUNIT CHLI-2, CHLOROPLASTIC"/>
    <property type="match status" value="1"/>
</dbReference>
<dbReference type="Pfam" id="PF17863">
    <property type="entry name" value="AAA_lid_2"/>
    <property type="match status" value="1"/>
</dbReference>
<dbReference type="Pfam" id="PF01078">
    <property type="entry name" value="Mg_chelatase"/>
    <property type="match status" value="1"/>
</dbReference>
<dbReference type="SMART" id="SM00382">
    <property type="entry name" value="AAA"/>
    <property type="match status" value="1"/>
</dbReference>
<dbReference type="SUPFAM" id="SSF52540">
    <property type="entry name" value="P-loop containing nucleoside triphosphate hydrolases"/>
    <property type="match status" value="1"/>
</dbReference>
<proteinExistence type="inferred from homology"/>
<accession>Q39516</accession>
<name>CHLI_GUITH</name>
<organism>
    <name type="scientific">Guillardia theta</name>
    <name type="common">Cryptophyte</name>
    <name type="synonym">Cryptomonas phi</name>
    <dbReference type="NCBI Taxonomy" id="55529"/>
    <lineage>
        <taxon>Eukaryota</taxon>
        <taxon>Cryptophyceae</taxon>
        <taxon>Pyrenomonadales</taxon>
        <taxon>Geminigeraceae</taxon>
        <taxon>Guillardia</taxon>
    </lineage>
</organism>